<comment type="function">
    <text evidence="1">Catalyzes the N-acylation of UDP-3-O-acylglucosamine using 3-hydroxyacyl-ACP as the acyl donor. Is involved in the biosynthesis of lipid A, a phosphorylated glycolipid that anchors the lipopolysaccharide to the outer membrane of the cell.</text>
</comment>
<comment type="catalytic activity">
    <reaction evidence="1">
        <text>a UDP-3-O-[(3R)-3-hydroxyacyl]-alpha-D-glucosamine + a (3R)-hydroxyacyl-[ACP] = a UDP-2-N,3-O-bis[(3R)-3-hydroxyacyl]-alpha-D-glucosamine + holo-[ACP] + H(+)</text>
        <dbReference type="Rhea" id="RHEA:53836"/>
        <dbReference type="Rhea" id="RHEA-COMP:9685"/>
        <dbReference type="Rhea" id="RHEA-COMP:9945"/>
        <dbReference type="ChEBI" id="CHEBI:15378"/>
        <dbReference type="ChEBI" id="CHEBI:64479"/>
        <dbReference type="ChEBI" id="CHEBI:78827"/>
        <dbReference type="ChEBI" id="CHEBI:137740"/>
        <dbReference type="ChEBI" id="CHEBI:137748"/>
        <dbReference type="EC" id="2.3.1.191"/>
    </reaction>
</comment>
<comment type="pathway">
    <text evidence="1">Bacterial outer membrane biogenesis; LPS lipid A biosynthesis.</text>
</comment>
<comment type="subunit">
    <text evidence="1">Homotrimer.</text>
</comment>
<comment type="similarity">
    <text evidence="1">Belongs to the transferase hexapeptide repeat family. LpxD subfamily.</text>
</comment>
<sequence>MSVQEVVGDPRFFARSGPYDVAAVAEAVGASIPADCTLSLTGVAPLQIAGPSEVSFLDNRRYADALEQTRAGAVIIKADMVDRVPAGVIALVVPEPYLAWARVAALFYPLPPVQPGIHPSAVVDETACIDPSAQIGPLAVIEAGVEIGPDCRIAAHAVIGAGVKMGRSCRIGSHASLSHAILGDRVYVYPGVRIGQDGFGFAPSSEGFVTVPQLGRVVLENDVEVGANSTIDRGSMHDTVIGAGSRLDNLVMIAHNVRMGRACVIVSQVGISGSTTLGDHVVLAGQAGLIGHLKIGSGARIGAQAGVMADVPAGAEIVGSPAQPAKDFFRQIATLRRLARR</sequence>
<evidence type="ECO:0000255" key="1">
    <source>
        <dbReference type="HAMAP-Rule" id="MF_00523"/>
    </source>
</evidence>
<dbReference type="EC" id="2.3.1.191" evidence="1"/>
<dbReference type="EMBL" id="CP000394">
    <property type="protein sequence ID" value="ABI61840.1"/>
    <property type="molecule type" value="Genomic_DNA"/>
</dbReference>
<dbReference type="RefSeq" id="WP_011631649.1">
    <property type="nucleotide sequence ID" value="NC_008343.2"/>
</dbReference>
<dbReference type="SMR" id="Q0BTL2"/>
<dbReference type="STRING" id="391165.GbCGDNIH1_0942"/>
<dbReference type="KEGG" id="gbe:GbCGDNIH1_0942"/>
<dbReference type="eggNOG" id="COG1044">
    <property type="taxonomic scope" value="Bacteria"/>
</dbReference>
<dbReference type="HOGENOM" id="CLU_049865_0_0_5"/>
<dbReference type="OrthoDB" id="9784739at2"/>
<dbReference type="UniPathway" id="UPA00973"/>
<dbReference type="Proteomes" id="UP000001963">
    <property type="component" value="Chromosome"/>
</dbReference>
<dbReference type="GO" id="GO:0016020">
    <property type="term" value="C:membrane"/>
    <property type="evidence" value="ECO:0007669"/>
    <property type="project" value="GOC"/>
</dbReference>
<dbReference type="GO" id="GO:0016410">
    <property type="term" value="F:N-acyltransferase activity"/>
    <property type="evidence" value="ECO:0007669"/>
    <property type="project" value="InterPro"/>
</dbReference>
<dbReference type="GO" id="GO:0009245">
    <property type="term" value="P:lipid A biosynthetic process"/>
    <property type="evidence" value="ECO:0007669"/>
    <property type="project" value="UniProtKB-UniRule"/>
</dbReference>
<dbReference type="CDD" id="cd03352">
    <property type="entry name" value="LbH_LpxD"/>
    <property type="match status" value="1"/>
</dbReference>
<dbReference type="Gene3D" id="2.160.10.10">
    <property type="entry name" value="Hexapeptide repeat proteins"/>
    <property type="match status" value="1"/>
</dbReference>
<dbReference type="Gene3D" id="3.40.1390.10">
    <property type="entry name" value="MurE/MurF, N-terminal domain"/>
    <property type="match status" value="1"/>
</dbReference>
<dbReference type="HAMAP" id="MF_00523">
    <property type="entry name" value="LpxD"/>
    <property type="match status" value="1"/>
</dbReference>
<dbReference type="InterPro" id="IPR001451">
    <property type="entry name" value="Hexapep"/>
</dbReference>
<dbReference type="InterPro" id="IPR018357">
    <property type="entry name" value="Hexapep_transf_CS"/>
</dbReference>
<dbReference type="InterPro" id="IPR007691">
    <property type="entry name" value="LpxD"/>
</dbReference>
<dbReference type="InterPro" id="IPR011004">
    <property type="entry name" value="Trimer_LpxA-like_sf"/>
</dbReference>
<dbReference type="InterPro" id="IPR020573">
    <property type="entry name" value="UDP_GlcNAc_AcTrfase_non-rep"/>
</dbReference>
<dbReference type="NCBIfam" id="TIGR01853">
    <property type="entry name" value="lipid_A_lpxD"/>
    <property type="match status" value="1"/>
</dbReference>
<dbReference type="NCBIfam" id="NF002060">
    <property type="entry name" value="PRK00892.1"/>
    <property type="match status" value="1"/>
</dbReference>
<dbReference type="PANTHER" id="PTHR43378">
    <property type="entry name" value="UDP-3-O-ACYLGLUCOSAMINE N-ACYLTRANSFERASE"/>
    <property type="match status" value="1"/>
</dbReference>
<dbReference type="PANTHER" id="PTHR43378:SF2">
    <property type="entry name" value="UDP-3-O-ACYLGLUCOSAMINE N-ACYLTRANSFERASE 1, MITOCHONDRIAL-RELATED"/>
    <property type="match status" value="1"/>
</dbReference>
<dbReference type="Pfam" id="PF00132">
    <property type="entry name" value="Hexapep"/>
    <property type="match status" value="1"/>
</dbReference>
<dbReference type="Pfam" id="PF04613">
    <property type="entry name" value="LpxD"/>
    <property type="match status" value="1"/>
</dbReference>
<dbReference type="SUPFAM" id="SSF51161">
    <property type="entry name" value="Trimeric LpxA-like enzymes"/>
    <property type="match status" value="1"/>
</dbReference>
<dbReference type="PROSITE" id="PS00101">
    <property type="entry name" value="HEXAPEP_TRANSFERASES"/>
    <property type="match status" value="1"/>
</dbReference>
<reference key="1">
    <citation type="journal article" date="2007" name="J. Bacteriol.">
        <title>Genome sequence analysis of the emerging human pathogenic acetic acid bacterium Granulibacter bethesdensis.</title>
        <authorList>
            <person name="Greenberg D.E."/>
            <person name="Porcella S.F."/>
            <person name="Zelazny A.M."/>
            <person name="Virtaneva K."/>
            <person name="Sturdevant D.E."/>
            <person name="Kupko J.J. III"/>
            <person name="Barbian K.D."/>
            <person name="Babar A."/>
            <person name="Dorward D.W."/>
            <person name="Holland S.M."/>
        </authorList>
    </citation>
    <scope>NUCLEOTIDE SEQUENCE [LARGE SCALE GENOMIC DNA]</scope>
    <source>
        <strain>ATCC BAA-1260 / CGDNIH1</strain>
    </source>
</reference>
<keyword id="KW-0012">Acyltransferase</keyword>
<keyword id="KW-0441">Lipid A biosynthesis</keyword>
<keyword id="KW-0444">Lipid biosynthesis</keyword>
<keyword id="KW-0443">Lipid metabolism</keyword>
<keyword id="KW-1185">Reference proteome</keyword>
<keyword id="KW-0677">Repeat</keyword>
<keyword id="KW-0808">Transferase</keyword>
<organism>
    <name type="scientific">Granulibacter bethesdensis (strain ATCC BAA-1260 / CGDNIH1)</name>
    <dbReference type="NCBI Taxonomy" id="391165"/>
    <lineage>
        <taxon>Bacteria</taxon>
        <taxon>Pseudomonadati</taxon>
        <taxon>Pseudomonadota</taxon>
        <taxon>Alphaproteobacteria</taxon>
        <taxon>Acetobacterales</taxon>
        <taxon>Acetobacteraceae</taxon>
        <taxon>Granulibacter</taxon>
    </lineage>
</organism>
<name>LPXD_GRABC</name>
<accession>Q0BTL2</accession>
<gene>
    <name evidence="1" type="primary">lpxD</name>
    <name type="ordered locus">GbCGDNIH1_0942</name>
</gene>
<protein>
    <recommendedName>
        <fullName evidence="1">UDP-3-O-acylglucosamine N-acyltransferase</fullName>
        <ecNumber evidence="1">2.3.1.191</ecNumber>
    </recommendedName>
</protein>
<feature type="chain" id="PRO_0000264379" description="UDP-3-O-acylglucosamine N-acyltransferase">
    <location>
        <begin position="1"/>
        <end position="341"/>
    </location>
</feature>
<feature type="active site" description="Proton acceptor" evidence="1">
    <location>
        <position position="255"/>
    </location>
</feature>
<proteinExistence type="inferred from homology"/>